<keyword id="KW-0968">Cytoplasmic vesicle</keyword>
<keyword id="KW-0472">Membrane</keyword>
<keyword id="KW-1185">Reference proteome</keyword>
<keyword id="KW-0770">Synapse</keyword>
<keyword id="KW-0812">Transmembrane</keyword>
<keyword id="KW-1133">Transmembrane helix</keyword>
<keyword id="KW-0813">Transport</keyword>
<organism>
    <name type="scientific">Xenopus laevis</name>
    <name type="common">African clawed frog</name>
    <dbReference type="NCBI Taxonomy" id="8355"/>
    <lineage>
        <taxon>Eukaryota</taxon>
        <taxon>Metazoa</taxon>
        <taxon>Chordata</taxon>
        <taxon>Craniata</taxon>
        <taxon>Vertebrata</taxon>
        <taxon>Euteleostomi</taxon>
        <taxon>Amphibia</taxon>
        <taxon>Batrachia</taxon>
        <taxon>Anura</taxon>
        <taxon>Pipoidea</taxon>
        <taxon>Pipidae</taxon>
        <taxon>Xenopodinae</taxon>
        <taxon>Xenopus</taxon>
        <taxon>Xenopus</taxon>
    </lineage>
</organism>
<name>SVOP_XENLA</name>
<accession>Q2XWK0</accession>
<comment type="subcellular location">
    <subcellularLocation>
        <location evidence="1">Cytoplasmic vesicle</location>
        <location evidence="1">Secretory vesicle</location>
        <location evidence="1">Synaptic vesicle membrane</location>
        <topology evidence="1">Multi-pass membrane protein</topology>
    </subcellularLocation>
</comment>
<comment type="tissue specificity">
    <text evidence="4">Detected in embryonic trigeminal ganglion and spinal cord.</text>
</comment>
<comment type="developmental stage">
    <text evidence="4">Expression increases continuously throughout embryonic development. First detected in embryos at day 12.</text>
</comment>
<comment type="similarity">
    <text evidence="5">Belongs to the major facilitator superfamily.</text>
</comment>
<feature type="chain" id="PRO_0000279456" description="Synaptic vesicle 2-related protein">
    <location>
        <begin position="1"/>
        <end position="548"/>
    </location>
</feature>
<feature type="topological domain" description="Cytoplasmic" evidence="2">
    <location>
        <begin position="1"/>
        <end position="87"/>
    </location>
</feature>
<feature type="transmembrane region" description="Helical" evidence="2">
    <location>
        <begin position="88"/>
        <end position="108"/>
    </location>
</feature>
<feature type="topological domain" description="Vesicular" evidence="2">
    <location>
        <begin position="109"/>
        <end position="119"/>
    </location>
</feature>
<feature type="transmembrane region" description="Helical" evidence="2">
    <location>
        <begin position="120"/>
        <end position="140"/>
    </location>
</feature>
<feature type="topological domain" description="Cytoplasmic" evidence="2">
    <location>
        <begin position="141"/>
        <end position="156"/>
    </location>
</feature>
<feature type="transmembrane region" description="Helical" evidence="2">
    <location>
        <begin position="157"/>
        <end position="177"/>
    </location>
</feature>
<feature type="topological domain" description="Vesicular" evidence="2">
    <location>
        <begin position="178"/>
        <end position="180"/>
    </location>
</feature>
<feature type="transmembrane region" description="Helical" evidence="2">
    <location>
        <begin position="181"/>
        <end position="201"/>
    </location>
</feature>
<feature type="topological domain" description="Cytoplasmic" evidence="2">
    <location>
        <begin position="202"/>
        <end position="209"/>
    </location>
</feature>
<feature type="transmembrane region" description="Helical" evidence="2">
    <location>
        <begin position="210"/>
        <end position="230"/>
    </location>
</feature>
<feature type="topological domain" description="Vesicular" evidence="2">
    <location>
        <begin position="231"/>
        <end position="238"/>
    </location>
</feature>
<feature type="transmembrane region" description="Helical" evidence="2">
    <location>
        <begin position="239"/>
        <end position="259"/>
    </location>
</feature>
<feature type="topological domain" description="Cytoplasmic" evidence="2">
    <location>
        <begin position="260"/>
        <end position="316"/>
    </location>
</feature>
<feature type="transmembrane region" description="Helical" evidence="2">
    <location>
        <begin position="317"/>
        <end position="337"/>
    </location>
</feature>
<feature type="topological domain" description="Vesicular" evidence="2">
    <location>
        <begin position="338"/>
        <end position="373"/>
    </location>
</feature>
<feature type="transmembrane region" description="Helical" evidence="2">
    <location>
        <begin position="374"/>
        <end position="394"/>
    </location>
</feature>
<feature type="topological domain" description="Cytoplasmic" evidence="2">
    <location>
        <begin position="395"/>
        <end position="401"/>
    </location>
</feature>
<feature type="transmembrane region" description="Helical" evidence="2">
    <location>
        <begin position="402"/>
        <end position="422"/>
    </location>
</feature>
<feature type="topological domain" description="Vesicular" evidence="2">
    <location>
        <begin position="423"/>
        <end position="424"/>
    </location>
</feature>
<feature type="transmembrane region" description="Helical" evidence="2">
    <location>
        <begin position="425"/>
        <end position="445"/>
    </location>
</feature>
<feature type="topological domain" description="Cytoplasmic" evidence="2">
    <location>
        <begin position="446"/>
        <end position="457"/>
    </location>
</feature>
<feature type="transmembrane region" description="Helical" evidence="2">
    <location>
        <begin position="458"/>
        <end position="478"/>
    </location>
</feature>
<feature type="topological domain" description="Vesicular" evidence="2">
    <location>
        <begin position="479"/>
        <end position="486"/>
    </location>
</feature>
<feature type="transmembrane region" description="Helical" evidence="2">
    <location>
        <begin position="487"/>
        <end position="507"/>
    </location>
</feature>
<feature type="topological domain" description="Cytoplasmic" evidence="2">
    <location>
        <begin position="508"/>
        <end position="548"/>
    </location>
</feature>
<feature type="region of interest" description="Disordered" evidence="3">
    <location>
        <begin position="519"/>
        <end position="548"/>
    </location>
</feature>
<feature type="compositionally biased region" description="Polar residues" evidence="3">
    <location>
        <begin position="537"/>
        <end position="548"/>
    </location>
</feature>
<reference key="1">
    <citation type="journal article" date="2005" name="Dev. Dyn.">
        <title>Expression of synaptic vesicle two-related protein SVOP in the developing nervous system of Xenopus laevis.</title>
        <authorList>
            <person name="Logan M.A."/>
            <person name="Steele M.R."/>
            <person name="Vetter M.L."/>
        </authorList>
    </citation>
    <scope>NUCLEOTIDE SEQUENCE [MRNA]</scope>
    <scope>DEVELOPMENTAL STAGE</scope>
    <scope>TISSUE SPECIFICITY</scope>
    <source>
        <tissue>Embryo</tissue>
    </source>
</reference>
<sequence>MEDDLFQLRHLPVVKFRRTGESSKSEDDNISGEHEIQIGPVQTELEAVELEDGTTVPKEFANPTDDTFMVEDAVEAIGFGKFQWKLSMLTGLAWMADAMEMMILSILAPQLHCEWRLPSWQVALLTSVVFIGMMASSSLWGNVSDQYGRRTGLKISVIWTLYYGILSAFAPVYSWILVLRGLVGFGIGGVPQSVTLYAEFLPMKSRAKCILLIEIFWALGTVFEVLLAIFVMPTLGWRWLLILSALPLMLFAILCFWLPESARYEVLSGNQEKALATLKRIATENGAPMPLGKLIVSRQEDRGKIRDLFSPQFRCTTLLLWFIWFSNAFSYYGLVLLTTELFQAGDVCSISNQRKAVKPKCSLACEYLTVEDYTDLLWTTLSEFPGLLVTLWIIDRVGRKKTMAICFIIFSFSALLLFLCVGRNVLTVFLFIARAFISGGFQAAYVYTPEVYPTATRALGLGTCSGMARVGALITPFIAQVMLESSIYLTVLVYSGCCVLAAVASCFLPIETKGRGLQESSHREWGQEMVGRGTHNVGATPSHSGSQE</sequence>
<proteinExistence type="evidence at transcript level"/>
<gene>
    <name type="primary">svop</name>
</gene>
<protein>
    <recommendedName>
        <fullName>Synaptic vesicle 2-related protein</fullName>
        <shortName>SV2-related protein</shortName>
    </recommendedName>
</protein>
<evidence type="ECO:0000250" key="1"/>
<evidence type="ECO:0000255" key="2"/>
<evidence type="ECO:0000256" key="3">
    <source>
        <dbReference type="SAM" id="MobiDB-lite"/>
    </source>
</evidence>
<evidence type="ECO:0000269" key="4">
    <source>
    </source>
</evidence>
<evidence type="ECO:0000305" key="5"/>
<dbReference type="EMBL" id="DQ167576">
    <property type="protein sequence ID" value="ABA54609.1"/>
    <property type="molecule type" value="mRNA"/>
</dbReference>
<dbReference type="RefSeq" id="NP_001089190.1">
    <property type="nucleotide sequence ID" value="NM_001095721.1"/>
</dbReference>
<dbReference type="SMR" id="Q2XWK0"/>
<dbReference type="GeneID" id="734235"/>
<dbReference type="KEGG" id="xla:734235"/>
<dbReference type="AGR" id="Xenbase:XB-GENE-939909"/>
<dbReference type="CTD" id="734235"/>
<dbReference type="Xenbase" id="XB-GENE-939909">
    <property type="gene designation" value="svop.L"/>
</dbReference>
<dbReference type="OMA" id="LLWFIWM"/>
<dbReference type="OrthoDB" id="4139357at2759"/>
<dbReference type="Proteomes" id="UP000186698">
    <property type="component" value="Chromosome 1L"/>
</dbReference>
<dbReference type="Bgee" id="734235">
    <property type="expression patterns" value="Expressed in brain and 8 other cell types or tissues"/>
</dbReference>
<dbReference type="GO" id="GO:0016020">
    <property type="term" value="C:membrane"/>
    <property type="evidence" value="ECO:0000318"/>
    <property type="project" value="GO_Central"/>
</dbReference>
<dbReference type="GO" id="GO:0030672">
    <property type="term" value="C:synaptic vesicle membrane"/>
    <property type="evidence" value="ECO:0007669"/>
    <property type="project" value="UniProtKB-SubCell"/>
</dbReference>
<dbReference type="GO" id="GO:0022857">
    <property type="term" value="F:transmembrane transporter activity"/>
    <property type="evidence" value="ECO:0007669"/>
    <property type="project" value="InterPro"/>
</dbReference>
<dbReference type="CDD" id="cd17441">
    <property type="entry name" value="MFS_SVOP"/>
    <property type="match status" value="1"/>
</dbReference>
<dbReference type="FunFam" id="1.20.1250.20:FF:000084">
    <property type="entry name" value="Synaptic vesicle 2-related protein"/>
    <property type="match status" value="1"/>
</dbReference>
<dbReference type="Gene3D" id="1.20.1250.20">
    <property type="entry name" value="MFS general substrate transporter like domains"/>
    <property type="match status" value="1"/>
</dbReference>
<dbReference type="InterPro" id="IPR011701">
    <property type="entry name" value="MFS"/>
</dbReference>
<dbReference type="InterPro" id="IPR020846">
    <property type="entry name" value="MFS_dom"/>
</dbReference>
<dbReference type="InterPro" id="IPR005828">
    <property type="entry name" value="MFS_sugar_transport-like"/>
</dbReference>
<dbReference type="InterPro" id="IPR036259">
    <property type="entry name" value="MFS_trans_sf"/>
</dbReference>
<dbReference type="InterPro" id="IPR047969">
    <property type="entry name" value="SVOP-like_MFS_dom"/>
</dbReference>
<dbReference type="PANTHER" id="PTHR23511:SF5">
    <property type="entry name" value="MAJOR FACILITATOR-TYPE TRANSPORTER HXNZ-RELATED"/>
    <property type="match status" value="1"/>
</dbReference>
<dbReference type="PANTHER" id="PTHR23511">
    <property type="entry name" value="SYNAPTIC VESICLE GLYCOPROTEIN 2"/>
    <property type="match status" value="1"/>
</dbReference>
<dbReference type="Pfam" id="PF07690">
    <property type="entry name" value="MFS_1"/>
    <property type="match status" value="1"/>
</dbReference>
<dbReference type="Pfam" id="PF00083">
    <property type="entry name" value="Sugar_tr"/>
    <property type="match status" value="1"/>
</dbReference>
<dbReference type="SUPFAM" id="SSF103473">
    <property type="entry name" value="MFS general substrate transporter"/>
    <property type="match status" value="1"/>
</dbReference>
<dbReference type="PROSITE" id="PS50850">
    <property type="entry name" value="MFS"/>
    <property type="match status" value="1"/>
</dbReference>